<protein>
    <recommendedName>
        <fullName evidence="1">NAD(P)H-quinone oxidoreductase subunit 1</fullName>
        <ecNumber evidence="1">7.1.1.-</ecNumber>
    </recommendedName>
    <alternativeName>
        <fullName evidence="1">NAD(P)H dehydrogenase I subunit 1</fullName>
    </alternativeName>
    <alternativeName>
        <fullName evidence="1">NDH-1 subunit 1</fullName>
    </alternativeName>
    <alternativeName>
        <fullName evidence="1">NDH-A</fullName>
    </alternativeName>
</protein>
<accession>Q3AGY8</accession>
<keyword id="KW-0472">Membrane</keyword>
<keyword id="KW-0520">NAD</keyword>
<keyword id="KW-0521">NADP</keyword>
<keyword id="KW-0618">Plastoquinone</keyword>
<keyword id="KW-0874">Quinone</keyword>
<keyword id="KW-0793">Thylakoid</keyword>
<keyword id="KW-1278">Translocase</keyword>
<keyword id="KW-0812">Transmembrane</keyword>
<keyword id="KW-1133">Transmembrane helix</keyword>
<gene>
    <name evidence="1" type="primary">ndhA</name>
    <name type="ordered locus">Syncc9605_2412</name>
</gene>
<comment type="function">
    <text evidence="1">NDH-1 shuttles electrons from an unknown electron donor, via FMN and iron-sulfur (Fe-S) centers, to quinones in the respiratory and/or the photosynthetic chain. The immediate electron acceptor for the enzyme in this species is believed to be plastoquinone. Couples the redox reaction to proton translocation, and thus conserves the redox energy in a proton gradient.</text>
</comment>
<comment type="catalytic activity">
    <reaction evidence="1">
        <text>a plastoquinone + NADH + (n+1) H(+)(in) = a plastoquinol + NAD(+) + n H(+)(out)</text>
        <dbReference type="Rhea" id="RHEA:42608"/>
        <dbReference type="Rhea" id="RHEA-COMP:9561"/>
        <dbReference type="Rhea" id="RHEA-COMP:9562"/>
        <dbReference type="ChEBI" id="CHEBI:15378"/>
        <dbReference type="ChEBI" id="CHEBI:17757"/>
        <dbReference type="ChEBI" id="CHEBI:57540"/>
        <dbReference type="ChEBI" id="CHEBI:57945"/>
        <dbReference type="ChEBI" id="CHEBI:62192"/>
    </reaction>
</comment>
<comment type="catalytic activity">
    <reaction evidence="1">
        <text>a plastoquinone + NADPH + (n+1) H(+)(in) = a plastoquinol + NADP(+) + n H(+)(out)</text>
        <dbReference type="Rhea" id="RHEA:42612"/>
        <dbReference type="Rhea" id="RHEA-COMP:9561"/>
        <dbReference type="Rhea" id="RHEA-COMP:9562"/>
        <dbReference type="ChEBI" id="CHEBI:15378"/>
        <dbReference type="ChEBI" id="CHEBI:17757"/>
        <dbReference type="ChEBI" id="CHEBI:57783"/>
        <dbReference type="ChEBI" id="CHEBI:58349"/>
        <dbReference type="ChEBI" id="CHEBI:62192"/>
    </reaction>
</comment>
<comment type="subunit">
    <text evidence="1">NDH-1 is composed of at least 11 different subunits.</text>
</comment>
<comment type="subcellular location">
    <subcellularLocation>
        <location evidence="1">Cellular thylakoid membrane</location>
        <topology evidence="1">Multi-pass membrane protein</topology>
    </subcellularLocation>
</comment>
<comment type="similarity">
    <text evidence="1">Belongs to the complex I subunit 1 family.</text>
</comment>
<organism>
    <name type="scientific">Synechococcus sp. (strain CC9605)</name>
    <dbReference type="NCBI Taxonomy" id="110662"/>
    <lineage>
        <taxon>Bacteria</taxon>
        <taxon>Bacillati</taxon>
        <taxon>Cyanobacteriota</taxon>
        <taxon>Cyanophyceae</taxon>
        <taxon>Synechococcales</taxon>
        <taxon>Synechococcaceae</taxon>
        <taxon>Synechococcus</taxon>
    </lineage>
</organism>
<proteinExistence type="inferred from homology"/>
<dbReference type="EC" id="7.1.1.-" evidence="1"/>
<dbReference type="EMBL" id="CP000110">
    <property type="protein sequence ID" value="ABB36144.1"/>
    <property type="molecule type" value="Genomic_DNA"/>
</dbReference>
<dbReference type="SMR" id="Q3AGY8"/>
<dbReference type="STRING" id="110662.Syncc9605_2412"/>
<dbReference type="KEGG" id="syd:Syncc9605_2412"/>
<dbReference type="eggNOG" id="COG1005">
    <property type="taxonomic scope" value="Bacteria"/>
</dbReference>
<dbReference type="HOGENOM" id="CLU_015134_0_1_3"/>
<dbReference type="OrthoDB" id="9803734at2"/>
<dbReference type="GO" id="GO:0031676">
    <property type="term" value="C:plasma membrane-derived thylakoid membrane"/>
    <property type="evidence" value="ECO:0007669"/>
    <property type="project" value="UniProtKB-SubCell"/>
</dbReference>
<dbReference type="GO" id="GO:0003954">
    <property type="term" value="F:NADH dehydrogenase activity"/>
    <property type="evidence" value="ECO:0007669"/>
    <property type="project" value="TreeGrafter"/>
</dbReference>
<dbReference type="GO" id="GO:0016655">
    <property type="term" value="F:oxidoreductase activity, acting on NAD(P)H, quinone or similar compound as acceptor"/>
    <property type="evidence" value="ECO:0007669"/>
    <property type="project" value="UniProtKB-UniRule"/>
</dbReference>
<dbReference type="GO" id="GO:0048038">
    <property type="term" value="F:quinone binding"/>
    <property type="evidence" value="ECO:0007669"/>
    <property type="project" value="UniProtKB-KW"/>
</dbReference>
<dbReference type="GO" id="GO:0009060">
    <property type="term" value="P:aerobic respiration"/>
    <property type="evidence" value="ECO:0007669"/>
    <property type="project" value="TreeGrafter"/>
</dbReference>
<dbReference type="GO" id="GO:0019684">
    <property type="term" value="P:photosynthesis, light reaction"/>
    <property type="evidence" value="ECO:0007669"/>
    <property type="project" value="UniProtKB-UniRule"/>
</dbReference>
<dbReference type="HAMAP" id="MF_01350">
    <property type="entry name" value="NDH1_NuoH"/>
    <property type="match status" value="1"/>
</dbReference>
<dbReference type="InterPro" id="IPR001694">
    <property type="entry name" value="NADH_UbQ_OxRdtase_su1/FPO"/>
</dbReference>
<dbReference type="InterPro" id="IPR018086">
    <property type="entry name" value="NADH_UbQ_OxRdtase_su1_CS"/>
</dbReference>
<dbReference type="NCBIfam" id="NF004741">
    <property type="entry name" value="PRK06076.1-2"/>
    <property type="match status" value="1"/>
</dbReference>
<dbReference type="NCBIfam" id="NF004744">
    <property type="entry name" value="PRK06076.1-5"/>
    <property type="match status" value="1"/>
</dbReference>
<dbReference type="PANTHER" id="PTHR11432">
    <property type="entry name" value="NADH DEHYDROGENASE SUBUNIT 1"/>
    <property type="match status" value="1"/>
</dbReference>
<dbReference type="PANTHER" id="PTHR11432:SF3">
    <property type="entry name" value="NADH-UBIQUINONE OXIDOREDUCTASE CHAIN 1"/>
    <property type="match status" value="1"/>
</dbReference>
<dbReference type="Pfam" id="PF00146">
    <property type="entry name" value="NADHdh"/>
    <property type="match status" value="1"/>
</dbReference>
<dbReference type="PROSITE" id="PS00667">
    <property type="entry name" value="COMPLEX1_ND1_1"/>
    <property type="match status" value="1"/>
</dbReference>
<dbReference type="PROSITE" id="PS00668">
    <property type="entry name" value="COMPLEX1_ND1_2"/>
    <property type="match status" value="1"/>
</dbReference>
<name>NU1C_SYNSC</name>
<evidence type="ECO:0000255" key="1">
    <source>
        <dbReference type="HAMAP-Rule" id="MF_01350"/>
    </source>
</evidence>
<reference key="1">
    <citation type="submission" date="2005-07" db="EMBL/GenBank/DDBJ databases">
        <title>Complete sequence of Synechococcus sp. CC9605.</title>
        <authorList>
            <consortium name="US DOE Joint Genome Institute"/>
            <person name="Copeland A."/>
            <person name="Lucas S."/>
            <person name="Lapidus A."/>
            <person name="Barry K."/>
            <person name="Detter J.C."/>
            <person name="Glavina T."/>
            <person name="Hammon N."/>
            <person name="Israni S."/>
            <person name="Pitluck S."/>
            <person name="Schmutz J."/>
            <person name="Martinez M."/>
            <person name="Larimer F."/>
            <person name="Land M."/>
            <person name="Kyrpides N."/>
            <person name="Ivanova N."/>
            <person name="Richardson P."/>
        </authorList>
    </citation>
    <scope>NUCLEOTIDE SEQUENCE [LARGE SCALE GENOMIC DNA]</scope>
    <source>
        <strain>CC9605</strain>
    </source>
</reference>
<feature type="chain" id="PRO_0000240050" description="NAD(P)H-quinone oxidoreductase subunit 1">
    <location>
        <begin position="1"/>
        <end position="373"/>
    </location>
</feature>
<feature type="transmembrane region" description="Helical" evidence="1">
    <location>
        <begin position="28"/>
        <end position="48"/>
    </location>
</feature>
<feature type="transmembrane region" description="Helical" evidence="1">
    <location>
        <begin position="98"/>
        <end position="118"/>
    </location>
</feature>
<feature type="transmembrane region" description="Helical" evidence="1">
    <location>
        <begin position="129"/>
        <end position="149"/>
    </location>
</feature>
<feature type="transmembrane region" description="Helical" evidence="1">
    <location>
        <begin position="177"/>
        <end position="197"/>
    </location>
</feature>
<feature type="transmembrane region" description="Helical" evidence="1">
    <location>
        <begin position="205"/>
        <end position="225"/>
    </location>
</feature>
<feature type="transmembrane region" description="Helical" evidence="1">
    <location>
        <begin position="267"/>
        <end position="287"/>
    </location>
</feature>
<feature type="transmembrane region" description="Helical" evidence="1">
    <location>
        <begin position="309"/>
        <end position="329"/>
    </location>
</feature>
<feature type="transmembrane region" description="Helical" evidence="1">
    <location>
        <begin position="348"/>
        <end position="368"/>
    </location>
</feature>
<sequence length="373" mass="40383">MVSPGLDLELSFSQALQGFGFSPEVARLLWLPLPMLLVLVAAVVGVLVSVWLERKISAAVQQRIGPEYAGALGVLQPLADGLKLLVKEDIIPARADSLLFTLGPVLVVVPVIISWLIIPFGQNLLISNVGVGIFLWISFSSIQPIGLLMSGYASNNKYSLLGGLRAAAQSISYEIPLALAVLAIVMMTNSLSTVDIVGQQTGAGILSWNIWRQPVGFLIFWICALAECERLPFDLPEAEEELVAGYQTEYAGMKFALFYLAGYINLVLSAVLVSVLYLGGWGFPIPVEWLAGWLNQPIDAPLVQVITGTVGIVMTVLKAYLLVFVAILLRWTTPRVRIDQLLDLGWKFLLPLSLVNLLVTAALKLAFPVAFGG</sequence>